<reference key="1">
    <citation type="journal article" date="2004" name="Proc. Natl. Acad. Sci. U.S.A.">
        <title>Genome sequence of the enterobacterial phytopathogen Erwinia carotovora subsp. atroseptica and characterization of virulence factors.</title>
        <authorList>
            <person name="Bell K.S."/>
            <person name="Sebaihia M."/>
            <person name="Pritchard L."/>
            <person name="Holden M.T.G."/>
            <person name="Hyman L.J."/>
            <person name="Holeva M.C."/>
            <person name="Thomson N.R."/>
            <person name="Bentley S.D."/>
            <person name="Churcher L.J.C."/>
            <person name="Mungall K."/>
            <person name="Atkin R."/>
            <person name="Bason N."/>
            <person name="Brooks K."/>
            <person name="Chillingworth T."/>
            <person name="Clark K."/>
            <person name="Doggett J."/>
            <person name="Fraser A."/>
            <person name="Hance Z."/>
            <person name="Hauser H."/>
            <person name="Jagels K."/>
            <person name="Moule S."/>
            <person name="Norbertczak H."/>
            <person name="Ormond D."/>
            <person name="Price C."/>
            <person name="Quail M.A."/>
            <person name="Sanders M."/>
            <person name="Walker D."/>
            <person name="Whitehead S."/>
            <person name="Salmond G.P.C."/>
            <person name="Birch P.R.J."/>
            <person name="Parkhill J."/>
            <person name="Toth I.K."/>
        </authorList>
    </citation>
    <scope>NUCLEOTIDE SEQUENCE [LARGE SCALE GENOMIC DNA]</scope>
    <source>
        <strain>SCRI 1043 / ATCC BAA-672</strain>
    </source>
</reference>
<protein>
    <recommendedName>
        <fullName evidence="1">Chorismate synthase</fullName>
        <shortName evidence="1">CS</shortName>
        <ecNumber evidence="1">4.2.3.5</ecNumber>
    </recommendedName>
    <alternativeName>
        <fullName evidence="1">5-enolpyruvylshikimate-3-phosphate phospholyase</fullName>
    </alternativeName>
</protein>
<gene>
    <name evidence="1" type="primary">aroC</name>
    <name type="ordered locus">ECA3069</name>
</gene>
<sequence length="361" mass="39169">MAGNSIGQFFRVTTFGESHGIALGCIVDGVPPGIPLTEADLQHDLDRRRPGTSRYTTQRREPDQVKILSGVFEGVTTGTSIGLLIENTDQRSQDYGAIKDVFRPGHADYTYEQKYGQRDYRGGGRSSARETAMRVAAGAIAKKYLQQQHGVKVRGYLSQIGDVTCELKDWEQVEQNPFFCPDIDKLDALDELMRALKKEGDSIGAKVSVVAESVPVGLGEPVFDRLDADLAHALMSINAVKGVEIGDGFAVVTKRGSENRDEITPEGFQSNHAGGILGGISSGQNIVAHLALKPTSSIMVPGKTINRQGEATEMVTRGRHDPCVGIRAVPIAEAMMAIVLMDHLLRQRAQCGDVNSQVPRW</sequence>
<name>AROC_PECAS</name>
<organism>
    <name type="scientific">Pectobacterium atrosepticum (strain SCRI 1043 / ATCC BAA-672)</name>
    <name type="common">Erwinia carotovora subsp. atroseptica</name>
    <dbReference type="NCBI Taxonomy" id="218491"/>
    <lineage>
        <taxon>Bacteria</taxon>
        <taxon>Pseudomonadati</taxon>
        <taxon>Pseudomonadota</taxon>
        <taxon>Gammaproteobacteria</taxon>
        <taxon>Enterobacterales</taxon>
        <taxon>Pectobacteriaceae</taxon>
        <taxon>Pectobacterium</taxon>
    </lineage>
</organism>
<accession>Q6D2M6</accession>
<dbReference type="EC" id="4.2.3.5" evidence="1"/>
<dbReference type="EMBL" id="BX950851">
    <property type="protein sequence ID" value="CAG75968.1"/>
    <property type="molecule type" value="Genomic_DNA"/>
</dbReference>
<dbReference type="RefSeq" id="WP_011094593.1">
    <property type="nucleotide sequence ID" value="NC_004547.2"/>
</dbReference>
<dbReference type="SMR" id="Q6D2M6"/>
<dbReference type="STRING" id="218491.ECA3069"/>
<dbReference type="KEGG" id="eca:ECA3069"/>
<dbReference type="eggNOG" id="COG0082">
    <property type="taxonomic scope" value="Bacteria"/>
</dbReference>
<dbReference type="HOGENOM" id="CLU_034547_0_2_6"/>
<dbReference type="OrthoDB" id="9771806at2"/>
<dbReference type="UniPathway" id="UPA00053">
    <property type="reaction ID" value="UER00090"/>
</dbReference>
<dbReference type="Proteomes" id="UP000007966">
    <property type="component" value="Chromosome"/>
</dbReference>
<dbReference type="GO" id="GO:0005829">
    <property type="term" value="C:cytosol"/>
    <property type="evidence" value="ECO:0007669"/>
    <property type="project" value="TreeGrafter"/>
</dbReference>
<dbReference type="GO" id="GO:0004107">
    <property type="term" value="F:chorismate synthase activity"/>
    <property type="evidence" value="ECO:0007669"/>
    <property type="project" value="UniProtKB-UniRule"/>
</dbReference>
<dbReference type="GO" id="GO:0010181">
    <property type="term" value="F:FMN binding"/>
    <property type="evidence" value="ECO:0007669"/>
    <property type="project" value="TreeGrafter"/>
</dbReference>
<dbReference type="GO" id="GO:0008652">
    <property type="term" value="P:amino acid biosynthetic process"/>
    <property type="evidence" value="ECO:0007669"/>
    <property type="project" value="UniProtKB-KW"/>
</dbReference>
<dbReference type="GO" id="GO:0009073">
    <property type="term" value="P:aromatic amino acid family biosynthetic process"/>
    <property type="evidence" value="ECO:0007669"/>
    <property type="project" value="UniProtKB-KW"/>
</dbReference>
<dbReference type="GO" id="GO:0009423">
    <property type="term" value="P:chorismate biosynthetic process"/>
    <property type="evidence" value="ECO:0007669"/>
    <property type="project" value="UniProtKB-UniRule"/>
</dbReference>
<dbReference type="CDD" id="cd07304">
    <property type="entry name" value="Chorismate_synthase"/>
    <property type="match status" value="1"/>
</dbReference>
<dbReference type="FunFam" id="3.60.150.10:FF:000001">
    <property type="entry name" value="Chorismate synthase"/>
    <property type="match status" value="1"/>
</dbReference>
<dbReference type="Gene3D" id="3.60.150.10">
    <property type="entry name" value="Chorismate synthase AroC"/>
    <property type="match status" value="1"/>
</dbReference>
<dbReference type="HAMAP" id="MF_00300">
    <property type="entry name" value="Chorismate_synth"/>
    <property type="match status" value="1"/>
</dbReference>
<dbReference type="InterPro" id="IPR000453">
    <property type="entry name" value="Chorismate_synth"/>
</dbReference>
<dbReference type="InterPro" id="IPR035904">
    <property type="entry name" value="Chorismate_synth_AroC_sf"/>
</dbReference>
<dbReference type="InterPro" id="IPR020541">
    <property type="entry name" value="Chorismate_synthase_CS"/>
</dbReference>
<dbReference type="NCBIfam" id="TIGR00033">
    <property type="entry name" value="aroC"/>
    <property type="match status" value="1"/>
</dbReference>
<dbReference type="NCBIfam" id="NF003793">
    <property type="entry name" value="PRK05382.1"/>
    <property type="match status" value="1"/>
</dbReference>
<dbReference type="PANTHER" id="PTHR21085">
    <property type="entry name" value="CHORISMATE SYNTHASE"/>
    <property type="match status" value="1"/>
</dbReference>
<dbReference type="PANTHER" id="PTHR21085:SF0">
    <property type="entry name" value="CHORISMATE SYNTHASE"/>
    <property type="match status" value="1"/>
</dbReference>
<dbReference type="Pfam" id="PF01264">
    <property type="entry name" value="Chorismate_synt"/>
    <property type="match status" value="1"/>
</dbReference>
<dbReference type="PIRSF" id="PIRSF001456">
    <property type="entry name" value="Chorismate_synth"/>
    <property type="match status" value="1"/>
</dbReference>
<dbReference type="SUPFAM" id="SSF103263">
    <property type="entry name" value="Chorismate synthase, AroC"/>
    <property type="match status" value="1"/>
</dbReference>
<dbReference type="PROSITE" id="PS00787">
    <property type="entry name" value="CHORISMATE_SYNTHASE_1"/>
    <property type="match status" value="1"/>
</dbReference>
<dbReference type="PROSITE" id="PS00788">
    <property type="entry name" value="CHORISMATE_SYNTHASE_2"/>
    <property type="match status" value="1"/>
</dbReference>
<dbReference type="PROSITE" id="PS00789">
    <property type="entry name" value="CHORISMATE_SYNTHASE_3"/>
    <property type="match status" value="1"/>
</dbReference>
<keyword id="KW-0028">Amino-acid biosynthesis</keyword>
<keyword id="KW-0057">Aromatic amino acid biosynthesis</keyword>
<keyword id="KW-0274">FAD</keyword>
<keyword id="KW-0285">Flavoprotein</keyword>
<keyword id="KW-0288">FMN</keyword>
<keyword id="KW-0456">Lyase</keyword>
<keyword id="KW-0521">NADP</keyword>
<keyword id="KW-1185">Reference proteome</keyword>
<evidence type="ECO:0000255" key="1">
    <source>
        <dbReference type="HAMAP-Rule" id="MF_00300"/>
    </source>
</evidence>
<proteinExistence type="inferred from homology"/>
<comment type="function">
    <text evidence="1">Catalyzes the anti-1,4-elimination of the C-3 phosphate and the C-6 proR hydrogen from 5-enolpyruvylshikimate-3-phosphate (EPSP) to yield chorismate, which is the branch point compound that serves as the starting substrate for the three terminal pathways of aromatic amino acid biosynthesis. This reaction introduces a second double bond into the aromatic ring system.</text>
</comment>
<comment type="catalytic activity">
    <reaction evidence="1">
        <text>5-O-(1-carboxyvinyl)-3-phosphoshikimate = chorismate + phosphate</text>
        <dbReference type="Rhea" id="RHEA:21020"/>
        <dbReference type="ChEBI" id="CHEBI:29748"/>
        <dbReference type="ChEBI" id="CHEBI:43474"/>
        <dbReference type="ChEBI" id="CHEBI:57701"/>
        <dbReference type="EC" id="4.2.3.5"/>
    </reaction>
</comment>
<comment type="cofactor">
    <cofactor evidence="1">
        <name>FMNH2</name>
        <dbReference type="ChEBI" id="CHEBI:57618"/>
    </cofactor>
    <text evidence="1">Reduced FMN (FMNH(2)).</text>
</comment>
<comment type="pathway">
    <text evidence="1">Metabolic intermediate biosynthesis; chorismate biosynthesis; chorismate from D-erythrose 4-phosphate and phosphoenolpyruvate: step 7/7.</text>
</comment>
<comment type="subunit">
    <text evidence="1">Homotetramer.</text>
</comment>
<comment type="similarity">
    <text evidence="1">Belongs to the chorismate synthase family.</text>
</comment>
<feature type="chain" id="PRO_0000140588" description="Chorismate synthase">
    <location>
        <begin position="1"/>
        <end position="361"/>
    </location>
</feature>
<feature type="binding site" evidence="1">
    <location>
        <position position="48"/>
    </location>
    <ligand>
        <name>NADP(+)</name>
        <dbReference type="ChEBI" id="CHEBI:58349"/>
    </ligand>
</feature>
<feature type="binding site" evidence="1">
    <location>
        <position position="54"/>
    </location>
    <ligand>
        <name>NADP(+)</name>
        <dbReference type="ChEBI" id="CHEBI:58349"/>
    </ligand>
</feature>
<feature type="binding site" evidence="1">
    <location>
        <begin position="125"/>
        <end position="127"/>
    </location>
    <ligand>
        <name>FMN</name>
        <dbReference type="ChEBI" id="CHEBI:58210"/>
    </ligand>
</feature>
<feature type="binding site" evidence="1">
    <location>
        <begin position="238"/>
        <end position="239"/>
    </location>
    <ligand>
        <name>FMN</name>
        <dbReference type="ChEBI" id="CHEBI:58210"/>
    </ligand>
</feature>
<feature type="binding site" evidence="1">
    <location>
        <position position="278"/>
    </location>
    <ligand>
        <name>FMN</name>
        <dbReference type="ChEBI" id="CHEBI:58210"/>
    </ligand>
</feature>
<feature type="binding site" evidence="1">
    <location>
        <begin position="293"/>
        <end position="297"/>
    </location>
    <ligand>
        <name>FMN</name>
        <dbReference type="ChEBI" id="CHEBI:58210"/>
    </ligand>
</feature>
<feature type="binding site" evidence="1">
    <location>
        <position position="319"/>
    </location>
    <ligand>
        <name>FMN</name>
        <dbReference type="ChEBI" id="CHEBI:58210"/>
    </ligand>
</feature>